<gene>
    <name evidence="1" type="primary">sat</name>
    <name type="ordered locus">Dgeo_1410</name>
</gene>
<accession>Q1IYH9</accession>
<feature type="chain" id="PRO_1000009039" description="Sulfate adenylyltransferase">
    <location>
        <begin position="1"/>
        <end position="389"/>
    </location>
</feature>
<sequence>MTTLSTATILLPEPLGGTLVNRVRRPGTDFDPAELQGLPRLELSDRSFADLEMLATGAYSPLTGFLGEADYLSVIERMRLADGTPWSIPITLPVSRAEAERYAGCVVLTRGGEAVGTLEVQERFEARQSLEAREVYRTEDTAHPGVAALYAQGDVNLAGPVTLFEVPRGNFPRHHRTPSEVRAVIEARGWRTTVAFQTRNPIHRAHEYLHKVTLELVDGLLLHPLVGQTKGDDVPAATRVKAYEVLLEHYYPKERTLLSVYPAAMRYAGPREAILHALSRRNYGVTHFIVGRDHAGVGQYYGTYDAQEIFSAYTPEELGIRILKFEHTFYCRTCGQLVSPRTCPHGSEHHLVLSGTKVREKLRAGERLPAEFTRPEVAEVLREAYAAQD</sequence>
<reference key="1">
    <citation type="submission" date="2006-04" db="EMBL/GenBank/DDBJ databases">
        <title>Complete sequence of chromosome of Deinococcus geothermalis DSM 11300.</title>
        <authorList>
            <person name="Copeland A."/>
            <person name="Lucas S."/>
            <person name="Lapidus A."/>
            <person name="Barry K."/>
            <person name="Detter J.C."/>
            <person name="Glavina del Rio T."/>
            <person name="Hammon N."/>
            <person name="Israni S."/>
            <person name="Dalin E."/>
            <person name="Tice H."/>
            <person name="Pitluck S."/>
            <person name="Brettin T."/>
            <person name="Bruce D."/>
            <person name="Han C."/>
            <person name="Tapia R."/>
            <person name="Saunders E."/>
            <person name="Gilna P."/>
            <person name="Schmutz J."/>
            <person name="Larimer F."/>
            <person name="Land M."/>
            <person name="Hauser L."/>
            <person name="Kyrpides N."/>
            <person name="Kim E."/>
            <person name="Daly M.J."/>
            <person name="Fredrickson J.K."/>
            <person name="Makarova K.S."/>
            <person name="Gaidamakova E.K."/>
            <person name="Zhai M."/>
            <person name="Richardson P."/>
        </authorList>
    </citation>
    <scope>NUCLEOTIDE SEQUENCE [LARGE SCALE GENOMIC DNA]</scope>
    <source>
        <strain>DSM 11300 / CIP 105573 / AG-3a</strain>
    </source>
</reference>
<comment type="catalytic activity">
    <reaction evidence="1">
        <text>sulfate + ATP + H(+) = adenosine 5'-phosphosulfate + diphosphate</text>
        <dbReference type="Rhea" id="RHEA:18133"/>
        <dbReference type="ChEBI" id="CHEBI:15378"/>
        <dbReference type="ChEBI" id="CHEBI:16189"/>
        <dbReference type="ChEBI" id="CHEBI:30616"/>
        <dbReference type="ChEBI" id="CHEBI:33019"/>
        <dbReference type="ChEBI" id="CHEBI:58243"/>
        <dbReference type="EC" id="2.7.7.4"/>
    </reaction>
</comment>
<comment type="pathway">
    <text evidence="1">Sulfur metabolism; hydrogen sulfide biosynthesis; sulfite from sulfate: step 1/3.</text>
</comment>
<comment type="similarity">
    <text evidence="1">Belongs to the sulfate adenylyltransferase family.</text>
</comment>
<dbReference type="EC" id="2.7.7.4" evidence="1"/>
<dbReference type="EMBL" id="CP000359">
    <property type="protein sequence ID" value="ABF45705.1"/>
    <property type="molecule type" value="Genomic_DNA"/>
</dbReference>
<dbReference type="RefSeq" id="WP_011530540.1">
    <property type="nucleotide sequence ID" value="NC_008025.1"/>
</dbReference>
<dbReference type="SMR" id="Q1IYH9"/>
<dbReference type="STRING" id="319795.Dgeo_1410"/>
<dbReference type="KEGG" id="dge:Dgeo_1410"/>
<dbReference type="eggNOG" id="COG2046">
    <property type="taxonomic scope" value="Bacteria"/>
</dbReference>
<dbReference type="HOGENOM" id="CLU_022950_1_1_0"/>
<dbReference type="UniPathway" id="UPA00140">
    <property type="reaction ID" value="UER00204"/>
</dbReference>
<dbReference type="Proteomes" id="UP000002431">
    <property type="component" value="Chromosome"/>
</dbReference>
<dbReference type="GO" id="GO:0005524">
    <property type="term" value="F:ATP binding"/>
    <property type="evidence" value="ECO:0007669"/>
    <property type="project" value="UniProtKB-KW"/>
</dbReference>
<dbReference type="GO" id="GO:0004781">
    <property type="term" value="F:sulfate adenylyltransferase (ATP) activity"/>
    <property type="evidence" value="ECO:0007669"/>
    <property type="project" value="UniProtKB-UniRule"/>
</dbReference>
<dbReference type="GO" id="GO:0070814">
    <property type="term" value="P:hydrogen sulfide biosynthetic process"/>
    <property type="evidence" value="ECO:0007669"/>
    <property type="project" value="UniProtKB-UniRule"/>
</dbReference>
<dbReference type="GO" id="GO:0000103">
    <property type="term" value="P:sulfate assimilation"/>
    <property type="evidence" value="ECO:0007669"/>
    <property type="project" value="UniProtKB-UniRule"/>
</dbReference>
<dbReference type="CDD" id="cd00517">
    <property type="entry name" value="ATPS"/>
    <property type="match status" value="1"/>
</dbReference>
<dbReference type="Gene3D" id="3.40.50.620">
    <property type="entry name" value="HUPs"/>
    <property type="match status" value="1"/>
</dbReference>
<dbReference type="Gene3D" id="3.10.400.10">
    <property type="entry name" value="Sulfate adenylyltransferase"/>
    <property type="match status" value="1"/>
</dbReference>
<dbReference type="HAMAP" id="MF_00066">
    <property type="entry name" value="Sulf_adenylyltr"/>
    <property type="match status" value="1"/>
</dbReference>
<dbReference type="InterPro" id="IPR025980">
    <property type="entry name" value="ATP-Sase_PUA-like_dom"/>
</dbReference>
<dbReference type="InterPro" id="IPR015947">
    <property type="entry name" value="PUA-like_sf"/>
</dbReference>
<dbReference type="InterPro" id="IPR014729">
    <property type="entry name" value="Rossmann-like_a/b/a_fold"/>
</dbReference>
<dbReference type="InterPro" id="IPR020792">
    <property type="entry name" value="SO4_adenylyltransferase_pro"/>
</dbReference>
<dbReference type="InterPro" id="IPR024951">
    <property type="entry name" value="Sulfurylase_cat_dom"/>
</dbReference>
<dbReference type="InterPro" id="IPR002650">
    <property type="entry name" value="Sulphate_adenylyltransferase"/>
</dbReference>
<dbReference type="NCBIfam" id="NF003166">
    <property type="entry name" value="PRK04149.1"/>
    <property type="match status" value="1"/>
</dbReference>
<dbReference type="NCBIfam" id="TIGR00339">
    <property type="entry name" value="sopT"/>
    <property type="match status" value="1"/>
</dbReference>
<dbReference type="PANTHER" id="PTHR43509">
    <property type="match status" value="1"/>
</dbReference>
<dbReference type="PANTHER" id="PTHR43509:SF1">
    <property type="entry name" value="SULFATE ADENYLYLTRANSFERASE"/>
    <property type="match status" value="1"/>
</dbReference>
<dbReference type="Pfam" id="PF01747">
    <property type="entry name" value="ATP-sulfurylase"/>
    <property type="match status" value="1"/>
</dbReference>
<dbReference type="Pfam" id="PF14306">
    <property type="entry name" value="PUA_2"/>
    <property type="match status" value="1"/>
</dbReference>
<dbReference type="SUPFAM" id="SSF52374">
    <property type="entry name" value="Nucleotidylyl transferase"/>
    <property type="match status" value="1"/>
</dbReference>
<dbReference type="SUPFAM" id="SSF88697">
    <property type="entry name" value="PUA domain-like"/>
    <property type="match status" value="1"/>
</dbReference>
<name>SAT_DEIGD</name>
<evidence type="ECO:0000255" key="1">
    <source>
        <dbReference type="HAMAP-Rule" id="MF_00066"/>
    </source>
</evidence>
<protein>
    <recommendedName>
        <fullName evidence="1">Sulfate adenylyltransferase</fullName>
        <ecNumber evidence="1">2.7.7.4</ecNumber>
    </recommendedName>
    <alternativeName>
        <fullName evidence="1">ATP-sulfurylase</fullName>
    </alternativeName>
    <alternativeName>
        <fullName evidence="1">Sulfate adenylate transferase</fullName>
        <shortName evidence="1">SAT</shortName>
    </alternativeName>
</protein>
<organism>
    <name type="scientific">Deinococcus geothermalis (strain DSM 11300 / CIP 105573 / AG-3a)</name>
    <dbReference type="NCBI Taxonomy" id="319795"/>
    <lineage>
        <taxon>Bacteria</taxon>
        <taxon>Thermotogati</taxon>
        <taxon>Deinococcota</taxon>
        <taxon>Deinococci</taxon>
        <taxon>Deinococcales</taxon>
        <taxon>Deinococcaceae</taxon>
        <taxon>Deinococcus</taxon>
    </lineage>
</organism>
<proteinExistence type="inferred from homology"/>
<keyword id="KW-0067">ATP-binding</keyword>
<keyword id="KW-0547">Nucleotide-binding</keyword>
<keyword id="KW-0548">Nucleotidyltransferase</keyword>
<keyword id="KW-0808">Transferase</keyword>